<comment type="function">
    <text evidence="1">An aminoacyl-tRNA editing enzyme that deacylates mischarged D-aminoacyl-tRNAs. Also deacylates mischarged glycyl-tRNA(Ala), protecting cells against glycine mischarging by AlaRS. Acts via tRNA-based rather than protein-based catalysis; rejects L-amino acids rather than detecting D-amino acids in the active site. By recycling D-aminoacyl-tRNA to D-amino acids and free tRNA molecules, this enzyme counteracts the toxicity associated with the formation of D-aminoacyl-tRNA entities in vivo and helps enforce protein L-homochirality.</text>
</comment>
<comment type="catalytic activity">
    <reaction evidence="1">
        <text>glycyl-tRNA(Ala) + H2O = tRNA(Ala) + glycine + H(+)</text>
        <dbReference type="Rhea" id="RHEA:53744"/>
        <dbReference type="Rhea" id="RHEA-COMP:9657"/>
        <dbReference type="Rhea" id="RHEA-COMP:13640"/>
        <dbReference type="ChEBI" id="CHEBI:15377"/>
        <dbReference type="ChEBI" id="CHEBI:15378"/>
        <dbReference type="ChEBI" id="CHEBI:57305"/>
        <dbReference type="ChEBI" id="CHEBI:78442"/>
        <dbReference type="ChEBI" id="CHEBI:78522"/>
        <dbReference type="EC" id="3.1.1.96"/>
    </reaction>
</comment>
<comment type="catalytic activity">
    <reaction evidence="1">
        <text>a D-aminoacyl-tRNA + H2O = a tRNA + a D-alpha-amino acid + H(+)</text>
        <dbReference type="Rhea" id="RHEA:13953"/>
        <dbReference type="Rhea" id="RHEA-COMP:10123"/>
        <dbReference type="Rhea" id="RHEA-COMP:10124"/>
        <dbReference type="ChEBI" id="CHEBI:15377"/>
        <dbReference type="ChEBI" id="CHEBI:15378"/>
        <dbReference type="ChEBI" id="CHEBI:59871"/>
        <dbReference type="ChEBI" id="CHEBI:78442"/>
        <dbReference type="ChEBI" id="CHEBI:79333"/>
        <dbReference type="EC" id="3.1.1.96"/>
    </reaction>
</comment>
<comment type="subunit">
    <text evidence="1">Homodimer.</text>
</comment>
<comment type="subcellular location">
    <subcellularLocation>
        <location evidence="1">Cytoplasm</location>
    </subcellularLocation>
</comment>
<comment type="domain">
    <text evidence="1">A Gly-cisPro motif from one monomer fits into the active site of the other monomer to allow specific chiral rejection of L-amino acids.</text>
</comment>
<comment type="similarity">
    <text evidence="2">Belongs to the DTD family.</text>
</comment>
<reference key="1">
    <citation type="journal article" date="2002" name="Nature">
        <title>The genome sequence of Schizosaccharomyces pombe.</title>
        <authorList>
            <person name="Wood V."/>
            <person name="Gwilliam R."/>
            <person name="Rajandream M.A."/>
            <person name="Lyne M.H."/>
            <person name="Lyne R."/>
            <person name="Stewart A."/>
            <person name="Sgouros J.G."/>
            <person name="Peat N."/>
            <person name="Hayles J."/>
            <person name="Baker S.G."/>
            <person name="Basham D."/>
            <person name="Bowman S."/>
            <person name="Brooks K."/>
            <person name="Brown D."/>
            <person name="Brown S."/>
            <person name="Chillingworth T."/>
            <person name="Churcher C.M."/>
            <person name="Collins M."/>
            <person name="Connor R."/>
            <person name="Cronin A."/>
            <person name="Davis P."/>
            <person name="Feltwell T."/>
            <person name="Fraser A."/>
            <person name="Gentles S."/>
            <person name="Goble A."/>
            <person name="Hamlin N."/>
            <person name="Harris D.E."/>
            <person name="Hidalgo J."/>
            <person name="Hodgson G."/>
            <person name="Holroyd S."/>
            <person name="Hornsby T."/>
            <person name="Howarth S."/>
            <person name="Huckle E.J."/>
            <person name="Hunt S."/>
            <person name="Jagels K."/>
            <person name="James K.D."/>
            <person name="Jones L."/>
            <person name="Jones M."/>
            <person name="Leather S."/>
            <person name="McDonald S."/>
            <person name="McLean J."/>
            <person name="Mooney P."/>
            <person name="Moule S."/>
            <person name="Mungall K.L."/>
            <person name="Murphy L.D."/>
            <person name="Niblett D."/>
            <person name="Odell C."/>
            <person name="Oliver K."/>
            <person name="O'Neil S."/>
            <person name="Pearson D."/>
            <person name="Quail M.A."/>
            <person name="Rabbinowitsch E."/>
            <person name="Rutherford K.M."/>
            <person name="Rutter S."/>
            <person name="Saunders D."/>
            <person name="Seeger K."/>
            <person name="Sharp S."/>
            <person name="Skelton J."/>
            <person name="Simmonds M.N."/>
            <person name="Squares R."/>
            <person name="Squares S."/>
            <person name="Stevens K."/>
            <person name="Taylor K."/>
            <person name="Taylor R.G."/>
            <person name="Tivey A."/>
            <person name="Walsh S.V."/>
            <person name="Warren T."/>
            <person name="Whitehead S."/>
            <person name="Woodward J.R."/>
            <person name="Volckaert G."/>
            <person name="Aert R."/>
            <person name="Robben J."/>
            <person name="Grymonprez B."/>
            <person name="Weltjens I."/>
            <person name="Vanstreels E."/>
            <person name="Rieger M."/>
            <person name="Schaefer M."/>
            <person name="Mueller-Auer S."/>
            <person name="Gabel C."/>
            <person name="Fuchs M."/>
            <person name="Duesterhoeft A."/>
            <person name="Fritzc C."/>
            <person name="Holzer E."/>
            <person name="Moestl D."/>
            <person name="Hilbert H."/>
            <person name="Borzym K."/>
            <person name="Langer I."/>
            <person name="Beck A."/>
            <person name="Lehrach H."/>
            <person name="Reinhardt R."/>
            <person name="Pohl T.M."/>
            <person name="Eger P."/>
            <person name="Zimmermann W."/>
            <person name="Wedler H."/>
            <person name="Wambutt R."/>
            <person name="Purnelle B."/>
            <person name="Goffeau A."/>
            <person name="Cadieu E."/>
            <person name="Dreano S."/>
            <person name="Gloux S."/>
            <person name="Lelaure V."/>
            <person name="Mottier S."/>
            <person name="Galibert F."/>
            <person name="Aves S.J."/>
            <person name="Xiang Z."/>
            <person name="Hunt C."/>
            <person name="Moore K."/>
            <person name="Hurst S.M."/>
            <person name="Lucas M."/>
            <person name="Rochet M."/>
            <person name="Gaillardin C."/>
            <person name="Tallada V.A."/>
            <person name="Garzon A."/>
            <person name="Thode G."/>
            <person name="Daga R.R."/>
            <person name="Cruzado L."/>
            <person name="Jimenez J."/>
            <person name="Sanchez M."/>
            <person name="del Rey F."/>
            <person name="Benito J."/>
            <person name="Dominguez A."/>
            <person name="Revuelta J.L."/>
            <person name="Moreno S."/>
            <person name="Armstrong J."/>
            <person name="Forsburg S.L."/>
            <person name="Cerutti L."/>
            <person name="Lowe T."/>
            <person name="McCombie W.R."/>
            <person name="Paulsen I."/>
            <person name="Potashkin J."/>
            <person name="Shpakovski G.V."/>
            <person name="Ussery D."/>
            <person name="Barrell B.G."/>
            <person name="Nurse P."/>
        </authorList>
    </citation>
    <scope>NUCLEOTIDE SEQUENCE [LARGE SCALE GENOMIC DNA]</scope>
    <source>
        <strain>972 / ATCC 24843</strain>
    </source>
</reference>
<proteinExistence type="inferred from homology"/>
<accession>O14274</accession>
<protein>
    <recommendedName>
        <fullName evidence="1">D-aminoacyl-tRNA deacylase</fullName>
        <shortName>DTD</shortName>
        <ecNumber evidence="1">3.1.1.96</ecNumber>
    </recommendedName>
    <alternativeName>
        <fullName evidence="1">Gly-tRNA(Ala) deacylase</fullName>
    </alternativeName>
</protein>
<dbReference type="EC" id="3.1.1.96" evidence="1"/>
<dbReference type="EMBL" id="CU329670">
    <property type="protein sequence ID" value="CAB16293.1"/>
    <property type="molecule type" value="Genomic_DNA"/>
</dbReference>
<dbReference type="PIR" id="T39142">
    <property type="entry name" value="T39142"/>
</dbReference>
<dbReference type="RefSeq" id="NP_594276.1">
    <property type="nucleotide sequence ID" value="NM_001019699.2"/>
</dbReference>
<dbReference type="SMR" id="O14274"/>
<dbReference type="BioGRID" id="279681">
    <property type="interactions" value="12"/>
</dbReference>
<dbReference type="FunCoup" id="O14274">
    <property type="interactions" value="473"/>
</dbReference>
<dbReference type="STRING" id="284812.O14274"/>
<dbReference type="iPTMnet" id="O14274"/>
<dbReference type="PaxDb" id="4896-SPAC8C9.05.1"/>
<dbReference type="EnsemblFungi" id="SPAC8C9.05.1">
    <property type="protein sequence ID" value="SPAC8C9.05.1:pep"/>
    <property type="gene ID" value="SPAC8C9.05"/>
</dbReference>
<dbReference type="GeneID" id="2543253"/>
<dbReference type="KEGG" id="spo:2543253"/>
<dbReference type="PomBase" id="SPAC8C9.05">
    <property type="gene designation" value="dtd1"/>
</dbReference>
<dbReference type="VEuPathDB" id="FungiDB:SPAC8C9.05"/>
<dbReference type="eggNOG" id="KOG3323">
    <property type="taxonomic scope" value="Eukaryota"/>
</dbReference>
<dbReference type="HOGENOM" id="CLU_076901_0_4_1"/>
<dbReference type="InParanoid" id="O14274"/>
<dbReference type="OMA" id="VFGADMK"/>
<dbReference type="PhylomeDB" id="O14274"/>
<dbReference type="PRO" id="PR:O14274"/>
<dbReference type="Proteomes" id="UP000002485">
    <property type="component" value="Chromosome I"/>
</dbReference>
<dbReference type="GO" id="GO:0005737">
    <property type="term" value="C:cytoplasm"/>
    <property type="evidence" value="ECO:0000318"/>
    <property type="project" value="GO_Central"/>
</dbReference>
<dbReference type="GO" id="GO:0005829">
    <property type="term" value="C:cytosol"/>
    <property type="evidence" value="ECO:0007005"/>
    <property type="project" value="PomBase"/>
</dbReference>
<dbReference type="GO" id="GO:0005634">
    <property type="term" value="C:nucleus"/>
    <property type="evidence" value="ECO:0007005"/>
    <property type="project" value="PomBase"/>
</dbReference>
<dbReference type="GO" id="GO:0051500">
    <property type="term" value="F:D-tyrosyl-tRNA(Tyr) deacylase activity"/>
    <property type="evidence" value="ECO:0000318"/>
    <property type="project" value="GO_Central"/>
</dbReference>
<dbReference type="GO" id="GO:0000049">
    <property type="term" value="F:tRNA binding"/>
    <property type="evidence" value="ECO:0007669"/>
    <property type="project" value="UniProtKB-KW"/>
</dbReference>
<dbReference type="GO" id="GO:0002181">
    <property type="term" value="P:cytoplasmic translation"/>
    <property type="evidence" value="ECO:0000266"/>
    <property type="project" value="PomBase"/>
</dbReference>
<dbReference type="GO" id="GO:0006399">
    <property type="term" value="P:tRNA metabolic process"/>
    <property type="evidence" value="ECO:0000318"/>
    <property type="project" value="GO_Central"/>
</dbReference>
<dbReference type="CDD" id="cd00563">
    <property type="entry name" value="Dtyr_deacylase"/>
    <property type="match status" value="1"/>
</dbReference>
<dbReference type="FunFam" id="3.50.80.10:FF:000001">
    <property type="entry name" value="D-aminoacyl-tRNA deacylase"/>
    <property type="match status" value="1"/>
</dbReference>
<dbReference type="Gene3D" id="3.50.80.10">
    <property type="entry name" value="D-tyrosyl-tRNA(Tyr) deacylase"/>
    <property type="match status" value="1"/>
</dbReference>
<dbReference type="HAMAP" id="MF_00518">
    <property type="entry name" value="Deacylase_Dtd"/>
    <property type="match status" value="1"/>
</dbReference>
<dbReference type="InterPro" id="IPR003732">
    <property type="entry name" value="Daa-tRNA_deacyls_DTD"/>
</dbReference>
<dbReference type="InterPro" id="IPR023509">
    <property type="entry name" value="DTD-like_sf"/>
</dbReference>
<dbReference type="NCBIfam" id="TIGR00256">
    <property type="entry name" value="D-aminoacyl-tRNA deacylase"/>
    <property type="match status" value="1"/>
</dbReference>
<dbReference type="PANTHER" id="PTHR10472:SF5">
    <property type="entry name" value="D-AMINOACYL-TRNA DEACYLASE 1"/>
    <property type="match status" value="1"/>
</dbReference>
<dbReference type="PANTHER" id="PTHR10472">
    <property type="entry name" value="D-TYROSYL-TRNA TYR DEACYLASE"/>
    <property type="match status" value="1"/>
</dbReference>
<dbReference type="Pfam" id="PF02580">
    <property type="entry name" value="Tyr_Deacylase"/>
    <property type="match status" value="1"/>
</dbReference>
<dbReference type="SUPFAM" id="SSF69500">
    <property type="entry name" value="DTD-like"/>
    <property type="match status" value="1"/>
</dbReference>
<evidence type="ECO:0000250" key="1">
    <source>
        <dbReference type="UniProtKB" id="Q8IIS0"/>
    </source>
</evidence>
<evidence type="ECO:0000305" key="2"/>
<sequence length="149" mass="16334">MKAVIQRVLNASVSVDDKIVSAIQQGYCILLGVGSDDTPEDVTKLSNKILKLKLFDNAEQPWKSTIADIQGEILCVSQFTLHARVNKGAKPDFHRSMKGPEAIELYEQVVKTLGESLGSDKIKKGVFGAMMNVQLVNNGPVTILYDTKE</sequence>
<gene>
    <name type="primary">dtd1</name>
    <name type="ORF">SPAC8C9.05</name>
</gene>
<keyword id="KW-0963">Cytoplasm</keyword>
<keyword id="KW-0378">Hydrolase</keyword>
<keyword id="KW-1185">Reference proteome</keyword>
<keyword id="KW-0694">RNA-binding</keyword>
<keyword id="KW-0820">tRNA-binding</keyword>
<organism>
    <name type="scientific">Schizosaccharomyces pombe (strain 972 / ATCC 24843)</name>
    <name type="common">Fission yeast</name>
    <dbReference type="NCBI Taxonomy" id="284812"/>
    <lineage>
        <taxon>Eukaryota</taxon>
        <taxon>Fungi</taxon>
        <taxon>Dikarya</taxon>
        <taxon>Ascomycota</taxon>
        <taxon>Taphrinomycotina</taxon>
        <taxon>Schizosaccharomycetes</taxon>
        <taxon>Schizosaccharomycetales</taxon>
        <taxon>Schizosaccharomycetaceae</taxon>
        <taxon>Schizosaccharomyces</taxon>
    </lineage>
</organism>
<feature type="chain" id="PRO_0000164632" description="D-aminoacyl-tRNA deacylase">
    <location>
        <begin position="1"/>
        <end position="149"/>
    </location>
</feature>
<feature type="short sequence motif" description="Gly-cisPro motif, important for rejection of L-amino acids" evidence="1">
    <location>
        <begin position="139"/>
        <end position="140"/>
    </location>
</feature>
<name>DTD_SCHPO</name>